<dbReference type="EMBL" id="L77117">
    <property type="protein sequence ID" value="AAB98511.1"/>
    <property type="molecule type" value="Genomic_DNA"/>
</dbReference>
<dbReference type="PIR" id="H64363">
    <property type="entry name" value="H64363"/>
</dbReference>
<dbReference type="STRING" id="243232.MJ_0512"/>
<dbReference type="PaxDb" id="243232-MJ_0512"/>
<dbReference type="EnsemblBacteria" id="AAB98511">
    <property type="protein sequence ID" value="AAB98511"/>
    <property type="gene ID" value="MJ_0512"/>
</dbReference>
<dbReference type="KEGG" id="mja:MJ_0512"/>
<dbReference type="eggNOG" id="arCOG08280">
    <property type="taxonomic scope" value="Archaea"/>
</dbReference>
<dbReference type="HOGENOM" id="CLU_1182896_0_0_2"/>
<dbReference type="InParanoid" id="Q57932"/>
<dbReference type="Proteomes" id="UP000000805">
    <property type="component" value="Chromosome"/>
</dbReference>
<feature type="chain" id="PRO_0000106905" description="Uncharacterized protein MJ0512">
    <location>
        <begin position="1"/>
        <end position="237"/>
    </location>
</feature>
<reference key="1">
    <citation type="journal article" date="1996" name="Science">
        <title>Complete genome sequence of the methanogenic archaeon, Methanococcus jannaschii.</title>
        <authorList>
            <person name="Bult C.J."/>
            <person name="White O."/>
            <person name="Olsen G.J."/>
            <person name="Zhou L."/>
            <person name="Fleischmann R.D."/>
            <person name="Sutton G.G."/>
            <person name="Blake J.A."/>
            <person name="FitzGerald L.M."/>
            <person name="Clayton R.A."/>
            <person name="Gocayne J.D."/>
            <person name="Kerlavage A.R."/>
            <person name="Dougherty B.A."/>
            <person name="Tomb J.-F."/>
            <person name="Adams M.D."/>
            <person name="Reich C.I."/>
            <person name="Overbeek R."/>
            <person name="Kirkness E.F."/>
            <person name="Weinstock K.G."/>
            <person name="Merrick J.M."/>
            <person name="Glodek A."/>
            <person name="Scott J.L."/>
            <person name="Geoghagen N.S.M."/>
            <person name="Weidman J.F."/>
            <person name="Fuhrmann J.L."/>
            <person name="Nguyen D."/>
            <person name="Utterback T.R."/>
            <person name="Kelley J.M."/>
            <person name="Peterson J.D."/>
            <person name="Sadow P.W."/>
            <person name="Hanna M.C."/>
            <person name="Cotton M.D."/>
            <person name="Roberts K.M."/>
            <person name="Hurst M.A."/>
            <person name="Kaine B.P."/>
            <person name="Borodovsky M."/>
            <person name="Klenk H.-P."/>
            <person name="Fraser C.M."/>
            <person name="Smith H.O."/>
            <person name="Woese C.R."/>
            <person name="Venter J.C."/>
        </authorList>
    </citation>
    <scope>NUCLEOTIDE SEQUENCE [LARGE SCALE GENOMIC DNA]</scope>
    <source>
        <strain>ATCC 43067 / DSM 2661 / JAL-1 / JCM 10045 / NBRC 100440</strain>
    </source>
</reference>
<keyword id="KW-1185">Reference proteome</keyword>
<organism>
    <name type="scientific">Methanocaldococcus jannaschii (strain ATCC 43067 / DSM 2661 / JAL-1 / JCM 10045 / NBRC 100440)</name>
    <name type="common">Methanococcus jannaschii</name>
    <dbReference type="NCBI Taxonomy" id="243232"/>
    <lineage>
        <taxon>Archaea</taxon>
        <taxon>Methanobacteriati</taxon>
        <taxon>Methanobacteriota</taxon>
        <taxon>Methanomada group</taxon>
        <taxon>Methanococci</taxon>
        <taxon>Methanococcales</taxon>
        <taxon>Methanocaldococcaceae</taxon>
        <taxon>Methanocaldococcus</taxon>
    </lineage>
</organism>
<protein>
    <recommendedName>
        <fullName>Uncharacterized protein MJ0512</fullName>
    </recommendedName>
</protein>
<proteinExistence type="predicted"/>
<name>Y512_METJA</name>
<sequence>MIFMVLGKIKSLLPNSQILTKVKIVDIRRKESEEGSIFYIGTMVDKDGVANFITTIPLERGKCYEIFGRITEEKSVRIVEKVIKGVKYPREIPEIPKEQLYNRGEVLDVKVPAILEVSQSTIFVNYYCKICRGIVDTKIKPRGLVYICRNCGEIDPEDVDVKIKVFGKIHFGTSSKRCYIPPATLEQFMPGILDMLEEYGIDDTIREICLKLNGKTFLVRGFEGKEGNYIITEMEDI</sequence>
<accession>Q57932</accession>
<gene>
    <name type="ordered locus">MJ0512</name>
</gene>